<feature type="chain" id="PRO_0000438637" description="Kinesin-like protein KIN-14L">
    <location>
        <begin position="1"/>
        <end position="1306"/>
    </location>
</feature>
<feature type="domain" description="Kinesin motor" evidence="2">
    <location>
        <begin position="142"/>
        <end position="456"/>
    </location>
</feature>
<feature type="region of interest" description="Disordered" evidence="3">
    <location>
        <begin position="592"/>
        <end position="627"/>
    </location>
</feature>
<feature type="region of interest" description="Disordered" evidence="3">
    <location>
        <begin position="657"/>
        <end position="710"/>
    </location>
</feature>
<feature type="region of interest" description="Disordered" evidence="3">
    <location>
        <begin position="849"/>
        <end position="881"/>
    </location>
</feature>
<feature type="coiled-coil region" evidence="1">
    <location>
        <begin position="466"/>
        <end position="507"/>
    </location>
</feature>
<feature type="coiled-coil region" evidence="1">
    <location>
        <begin position="540"/>
        <end position="595"/>
    </location>
</feature>
<feature type="compositionally biased region" description="Polar residues" evidence="3">
    <location>
        <begin position="592"/>
        <end position="611"/>
    </location>
</feature>
<feature type="compositionally biased region" description="Polar residues" evidence="3">
    <location>
        <begin position="660"/>
        <end position="677"/>
    </location>
</feature>
<feature type="compositionally biased region" description="Low complexity" evidence="3">
    <location>
        <begin position="855"/>
        <end position="867"/>
    </location>
</feature>
<feature type="binding site" evidence="2">
    <location>
        <begin position="223"/>
        <end position="230"/>
    </location>
    <ligand>
        <name>ATP</name>
        <dbReference type="ChEBI" id="CHEBI:30616"/>
    </ligand>
</feature>
<name>KN14L_ORYSJ</name>
<evidence type="ECO:0000255" key="1"/>
<evidence type="ECO:0000255" key="2">
    <source>
        <dbReference type="PROSITE-ProRule" id="PRU00283"/>
    </source>
</evidence>
<evidence type="ECO:0000256" key="3">
    <source>
        <dbReference type="SAM" id="MobiDB-lite"/>
    </source>
</evidence>
<evidence type="ECO:0000303" key="4">
    <source>
    </source>
</evidence>
<evidence type="ECO:0000305" key="5"/>
<evidence type="ECO:0000312" key="6">
    <source>
        <dbReference type="EMBL" id="BAD35845.1"/>
    </source>
</evidence>
<evidence type="ECO:0000312" key="7">
    <source>
        <dbReference type="EMBL" id="BAS96798.1"/>
    </source>
</evidence>
<evidence type="ECO:0000312" key="8">
    <source>
        <dbReference type="EMBL" id="EEE65335.1"/>
    </source>
</evidence>
<gene>
    <name evidence="5" type="primary">KIN14L</name>
    <name evidence="7" type="ordered locus">Os06g0217600</name>
    <name evidence="5" type="ordered locus">LOC_Os06g11380</name>
    <name evidence="8" type="ORF">OsJ_20602</name>
    <name evidence="6" type="ORF">OSJNBb0024N18.29</name>
</gene>
<accession>B9FS74</accession>
<accession>A0A0P0WUD2</accession>
<accession>Q69TG2</accession>
<comment type="similarity">
    <text evidence="4">Belongs to the TRAFAC class myosin-kinesin ATPase superfamily. Kinesin family. KIN-14 subfamily.</text>
</comment>
<comment type="sequence caution" evidence="5">
    <conflict type="erroneous gene model prediction">
        <sequence resource="EMBL-CDS" id="BAD35845"/>
    </conflict>
</comment>
<comment type="sequence caution" evidence="5">
    <conflict type="erroneous gene model prediction">
        <sequence resource="EMBL-CDS" id="BAF19065"/>
    </conflict>
</comment>
<comment type="sequence caution" evidence="5">
    <conflict type="erroneous gene model prediction">
        <sequence resource="EMBL-CDS" id="BAS96798"/>
    </conflict>
</comment>
<keyword id="KW-0067">ATP-binding</keyword>
<keyword id="KW-0175">Coiled coil</keyword>
<keyword id="KW-0493">Microtubule</keyword>
<keyword id="KW-0505">Motor protein</keyword>
<keyword id="KW-0547">Nucleotide-binding</keyword>
<keyword id="KW-1185">Reference proteome</keyword>
<sequence length="1306" mass="144512">MADTRGRWAWDVPGFEPPQPVVGAAAGMPLAPPTAMPRAPPTAMVARAAGADGAVVPVADRLDQLADSVQLAREDCLELRQEASDLLEYSNAKLGRVTRYLGFLADRTRKLDQAALETEARITPLIHEKKRLFNDLLTLKGNVKVFCRSRPLFEDEGSSVVEFPDDFTIRVNTGDESLTNPKKDYEFDRVYGPHIGQGELFHDVQPLVQSALDGYNVAIFAYGQSRSGKTHTLEGSSHDRGLYLRSFEELFDLSNSDTTSTSHFNFYITACELYNDQVRDLLSDSISPVPKVRMGVQESFVELVQEKVENPLEFSNSLKAALENRSANSLKVMVSHLIVTIHIHYRNYVTGEHLYSKLSLVDLPASECLLEEDANRDNVTDFLHVSKSLSALGDALASLSAKKEPVLSGNSRITQILADSLGSSSKTLLIVHVSPSASNLSRTLSTLSFSARAKNAELSLGNRDTIKKWKDVANDSRKELHDKEKEVLDLRQEVLGLKLSLKEANDQCTLLFNEVQKAWRVSSTLQADLKSENLMLAEKHRIEKEQNNQLRDQISRLLEVEQEQKIKMHERDLTIQSLQAKLKSIESQLNEALNSSDARSTIGSESASVISTPKMMESTADSSSVTKRLEEELAKRDALIEKLHEENEKLFDRLTEKSGLGSSPQAPSPSNKQTNAQGRDIGRSDSTKSQSSDVFPLPVSQDKAGNSGAIVKSSNELTKTTPAGEYLTSALMDFDPNQFEGVAAIADGANKLLMLPYFHCHRDYNETPPISDWCMVLAAVIKAGAAREHEILAEIRDAVFSFIRKMEPRKVMDTMLVSRVKILYIRSLLARSPELQSIKVSPVERFLEKSHTSRSRSSSRGSSPGRSPVHHHHDHGSRTSLIDEHVHGFKVNIKPERKSKFSSIVLKLRGIEEETWRQHVTGGKLREITEEAKAFAIGNKALAALFVHTPAGELQRQIRAWLAENFEFLSVTGGDVAGASGQLELLSTAIMDGWMAGLGTARPPSTDALGQLLSEYTKRVYTSQLHHLKDIAGTLATEVADDPAHVSKLRSALESVDHKRRKIMQQMRTDTVLLTKEEGGSPIRNPPTAAEDARLASLISLDNIIKQVKEVMRQSSARPLRKSKKKALLESLDDLLAQMPSLLDVDHPCAQKQIMEARKVVESLQEDPDEPATDLNSNTLGESEVSQWNVLQFNTGTSAPFIIKCGANSSCELVIKADQKIQEPKGDEIIRVVPKPSVLAEMSFEEIKGVFEELPEAISLLALARTADGTRARYSRLYRTLANKVPALKDIVAEMEKGGVFKDVRS</sequence>
<proteinExistence type="evidence at transcript level"/>
<reference key="1">
    <citation type="journal article" date="2005" name="Nature">
        <title>The map-based sequence of the rice genome.</title>
        <authorList>
            <consortium name="International rice genome sequencing project (IRGSP)"/>
        </authorList>
    </citation>
    <scope>NUCLEOTIDE SEQUENCE [LARGE SCALE GENOMIC DNA]</scope>
    <source>
        <strain>cv. Nipponbare</strain>
    </source>
</reference>
<reference key="2">
    <citation type="journal article" date="2008" name="Nucleic Acids Res.">
        <title>The rice annotation project database (RAP-DB): 2008 update.</title>
        <authorList>
            <consortium name="The rice annotation project (RAP)"/>
        </authorList>
    </citation>
    <scope>GENOME REANNOTATION</scope>
    <source>
        <strain>cv. Nipponbare</strain>
    </source>
</reference>
<reference key="3">
    <citation type="journal article" date="2013" name="Rice">
        <title>Improvement of the Oryza sativa Nipponbare reference genome using next generation sequence and optical map data.</title>
        <authorList>
            <person name="Kawahara Y."/>
            <person name="de la Bastide M."/>
            <person name="Hamilton J.P."/>
            <person name="Kanamori H."/>
            <person name="McCombie W.R."/>
            <person name="Ouyang S."/>
            <person name="Schwartz D.C."/>
            <person name="Tanaka T."/>
            <person name="Wu J."/>
            <person name="Zhou S."/>
            <person name="Childs K.L."/>
            <person name="Davidson R.M."/>
            <person name="Lin H."/>
            <person name="Quesada-Ocampo L."/>
            <person name="Vaillancourt B."/>
            <person name="Sakai H."/>
            <person name="Lee S.S."/>
            <person name="Kim J."/>
            <person name="Numa H."/>
            <person name="Itoh T."/>
            <person name="Buell C.R."/>
            <person name="Matsumoto T."/>
        </authorList>
    </citation>
    <scope>GENOME REANNOTATION</scope>
    <source>
        <strain>cv. Nipponbare</strain>
    </source>
</reference>
<reference key="4">
    <citation type="journal article" date="2005" name="PLoS Biol.">
        <title>The genomes of Oryza sativa: a history of duplications.</title>
        <authorList>
            <person name="Yu J."/>
            <person name="Wang J."/>
            <person name="Lin W."/>
            <person name="Li S."/>
            <person name="Li H."/>
            <person name="Zhou J."/>
            <person name="Ni P."/>
            <person name="Dong W."/>
            <person name="Hu S."/>
            <person name="Zeng C."/>
            <person name="Zhang J."/>
            <person name="Zhang Y."/>
            <person name="Li R."/>
            <person name="Xu Z."/>
            <person name="Li S."/>
            <person name="Li X."/>
            <person name="Zheng H."/>
            <person name="Cong L."/>
            <person name="Lin L."/>
            <person name="Yin J."/>
            <person name="Geng J."/>
            <person name="Li G."/>
            <person name="Shi J."/>
            <person name="Liu J."/>
            <person name="Lv H."/>
            <person name="Li J."/>
            <person name="Wang J."/>
            <person name="Deng Y."/>
            <person name="Ran L."/>
            <person name="Shi X."/>
            <person name="Wang X."/>
            <person name="Wu Q."/>
            <person name="Li C."/>
            <person name="Ren X."/>
            <person name="Wang J."/>
            <person name="Wang X."/>
            <person name="Li D."/>
            <person name="Liu D."/>
            <person name="Zhang X."/>
            <person name="Ji Z."/>
            <person name="Zhao W."/>
            <person name="Sun Y."/>
            <person name="Zhang Z."/>
            <person name="Bao J."/>
            <person name="Han Y."/>
            <person name="Dong L."/>
            <person name="Ji J."/>
            <person name="Chen P."/>
            <person name="Wu S."/>
            <person name="Liu J."/>
            <person name="Xiao Y."/>
            <person name="Bu D."/>
            <person name="Tan J."/>
            <person name="Yang L."/>
            <person name="Ye C."/>
            <person name="Zhang J."/>
            <person name="Xu J."/>
            <person name="Zhou Y."/>
            <person name="Yu Y."/>
            <person name="Zhang B."/>
            <person name="Zhuang S."/>
            <person name="Wei H."/>
            <person name="Liu B."/>
            <person name="Lei M."/>
            <person name="Yu H."/>
            <person name="Li Y."/>
            <person name="Xu H."/>
            <person name="Wei S."/>
            <person name="He X."/>
            <person name="Fang L."/>
            <person name="Zhang Z."/>
            <person name="Zhang Y."/>
            <person name="Huang X."/>
            <person name="Su Z."/>
            <person name="Tong W."/>
            <person name="Li J."/>
            <person name="Tong Z."/>
            <person name="Li S."/>
            <person name="Ye J."/>
            <person name="Wang L."/>
            <person name="Fang L."/>
            <person name="Lei T."/>
            <person name="Chen C.-S."/>
            <person name="Chen H.-C."/>
            <person name="Xu Z."/>
            <person name="Li H."/>
            <person name="Huang H."/>
            <person name="Zhang F."/>
            <person name="Xu H."/>
            <person name="Li N."/>
            <person name="Zhao C."/>
            <person name="Li S."/>
            <person name="Dong L."/>
            <person name="Huang Y."/>
            <person name="Li L."/>
            <person name="Xi Y."/>
            <person name="Qi Q."/>
            <person name="Li W."/>
            <person name="Zhang B."/>
            <person name="Hu W."/>
            <person name="Zhang Y."/>
            <person name="Tian X."/>
            <person name="Jiao Y."/>
            <person name="Liang X."/>
            <person name="Jin J."/>
            <person name="Gao L."/>
            <person name="Zheng W."/>
            <person name="Hao B."/>
            <person name="Liu S.-M."/>
            <person name="Wang W."/>
            <person name="Yuan L."/>
            <person name="Cao M."/>
            <person name="McDermott J."/>
            <person name="Samudrala R."/>
            <person name="Wang J."/>
            <person name="Wong G.K.-S."/>
            <person name="Yang H."/>
        </authorList>
    </citation>
    <scope>NUCLEOTIDE SEQUENCE [LARGE SCALE GENOMIC DNA]</scope>
    <source>
        <strain>cv. Nipponbare</strain>
    </source>
</reference>
<reference key="5">
    <citation type="journal article" date="2003" name="Science">
        <title>Collection, mapping, and annotation of over 28,000 cDNA clones from japonica rice.</title>
        <authorList>
            <consortium name="The rice full-length cDNA consortium"/>
        </authorList>
    </citation>
    <scope>NUCLEOTIDE SEQUENCE [LARGE SCALE MRNA] OF 1063-1306</scope>
    <source>
        <strain>cv. Nipponbare</strain>
    </source>
</reference>
<reference key="6">
    <citation type="journal article" date="2009" name="Ann. Bot.">
        <title>Evaluating the microtubule cytoskeleton and its interacting proteins in monocots by mining the rice genome.</title>
        <authorList>
            <person name="Guo L."/>
            <person name="Ho C.M."/>
            <person name="Kong Z."/>
            <person name="Lee Y.R."/>
            <person name="Qian Q."/>
            <person name="Liu B."/>
        </authorList>
    </citation>
    <scope>GENE FAMILY</scope>
    <scope>NOMENCLATURE</scope>
</reference>
<dbReference type="EMBL" id="AP004741">
    <property type="protein sequence ID" value="BAD35845.1"/>
    <property type="status" value="ALT_SEQ"/>
    <property type="molecule type" value="Genomic_DNA"/>
</dbReference>
<dbReference type="EMBL" id="AP008212">
    <property type="protein sequence ID" value="BAF19065.1"/>
    <property type="status" value="ALT_SEQ"/>
    <property type="molecule type" value="Genomic_DNA"/>
</dbReference>
<dbReference type="EMBL" id="AP014962">
    <property type="protein sequence ID" value="BAS96798.1"/>
    <property type="status" value="ALT_SEQ"/>
    <property type="molecule type" value="Genomic_DNA"/>
</dbReference>
<dbReference type="EMBL" id="CM000143">
    <property type="protein sequence ID" value="EEE65335.1"/>
    <property type="molecule type" value="Genomic_DNA"/>
</dbReference>
<dbReference type="EMBL" id="AK071349">
    <property type="status" value="NOT_ANNOTATED_CDS"/>
    <property type="molecule type" value="mRNA"/>
</dbReference>
<dbReference type="SMR" id="B9FS74"/>
<dbReference type="FunCoup" id="B9FS74">
    <property type="interactions" value="1731"/>
</dbReference>
<dbReference type="STRING" id="39947.B9FS74"/>
<dbReference type="PaxDb" id="39947-B9FS74"/>
<dbReference type="KEGG" id="dosa:Os06g0217600"/>
<dbReference type="eggNOG" id="KOG0239">
    <property type="taxonomic scope" value="Eukaryota"/>
</dbReference>
<dbReference type="HOGENOM" id="CLU_938155_0_0_1"/>
<dbReference type="InParanoid" id="B9FS74"/>
<dbReference type="Proteomes" id="UP000000763">
    <property type="component" value="Chromosome 6"/>
</dbReference>
<dbReference type="Proteomes" id="UP000007752">
    <property type="component" value="Chromosome 6"/>
</dbReference>
<dbReference type="Proteomes" id="UP000059680">
    <property type="component" value="Chromosome 6"/>
</dbReference>
<dbReference type="GO" id="GO:0005874">
    <property type="term" value="C:microtubule"/>
    <property type="evidence" value="ECO:0007669"/>
    <property type="project" value="UniProtKB-KW"/>
</dbReference>
<dbReference type="GO" id="GO:0015630">
    <property type="term" value="C:microtubule cytoskeleton"/>
    <property type="evidence" value="ECO:0000318"/>
    <property type="project" value="GO_Central"/>
</dbReference>
<dbReference type="GO" id="GO:0005524">
    <property type="term" value="F:ATP binding"/>
    <property type="evidence" value="ECO:0007669"/>
    <property type="project" value="UniProtKB-KW"/>
</dbReference>
<dbReference type="GO" id="GO:0008017">
    <property type="term" value="F:microtubule binding"/>
    <property type="evidence" value="ECO:0000318"/>
    <property type="project" value="GO_Central"/>
</dbReference>
<dbReference type="GO" id="GO:0003777">
    <property type="term" value="F:microtubule motor activity"/>
    <property type="evidence" value="ECO:0007669"/>
    <property type="project" value="InterPro"/>
</dbReference>
<dbReference type="GO" id="GO:0007018">
    <property type="term" value="P:microtubule-based movement"/>
    <property type="evidence" value="ECO:0007669"/>
    <property type="project" value="InterPro"/>
</dbReference>
<dbReference type="GO" id="GO:0007017">
    <property type="term" value="P:microtubule-based process"/>
    <property type="evidence" value="ECO:0000318"/>
    <property type="project" value="GO_Central"/>
</dbReference>
<dbReference type="FunFam" id="3.40.850.10:FF:000058">
    <property type="entry name" value="kinesin-like protein KIN-14B isoform X1"/>
    <property type="match status" value="1"/>
</dbReference>
<dbReference type="Gene3D" id="3.40.850.10">
    <property type="entry name" value="Kinesin motor domain"/>
    <property type="match status" value="1"/>
</dbReference>
<dbReference type="InterPro" id="IPR027640">
    <property type="entry name" value="Kinesin-like_fam"/>
</dbReference>
<dbReference type="InterPro" id="IPR001752">
    <property type="entry name" value="Kinesin_motor_dom"/>
</dbReference>
<dbReference type="InterPro" id="IPR036961">
    <property type="entry name" value="Kinesin_motor_dom_sf"/>
</dbReference>
<dbReference type="InterPro" id="IPR027417">
    <property type="entry name" value="P-loop_NTPase"/>
</dbReference>
<dbReference type="PANTHER" id="PTHR47972:SF22">
    <property type="entry name" value="KINESIN-LIKE PROTEIN KIN-14A-RELATED"/>
    <property type="match status" value="1"/>
</dbReference>
<dbReference type="PANTHER" id="PTHR47972">
    <property type="entry name" value="KINESIN-LIKE PROTEIN KLP-3"/>
    <property type="match status" value="1"/>
</dbReference>
<dbReference type="Pfam" id="PF00225">
    <property type="entry name" value="Kinesin"/>
    <property type="match status" value="1"/>
</dbReference>
<dbReference type="PRINTS" id="PR00380">
    <property type="entry name" value="KINESINHEAVY"/>
</dbReference>
<dbReference type="SMART" id="SM00129">
    <property type="entry name" value="KISc"/>
    <property type="match status" value="1"/>
</dbReference>
<dbReference type="SUPFAM" id="SSF52540">
    <property type="entry name" value="P-loop containing nucleoside triphosphate hydrolases"/>
    <property type="match status" value="1"/>
</dbReference>
<dbReference type="PROSITE" id="PS50067">
    <property type="entry name" value="KINESIN_MOTOR_2"/>
    <property type="match status" value="1"/>
</dbReference>
<organism>
    <name type="scientific">Oryza sativa subsp. japonica</name>
    <name type="common">Rice</name>
    <dbReference type="NCBI Taxonomy" id="39947"/>
    <lineage>
        <taxon>Eukaryota</taxon>
        <taxon>Viridiplantae</taxon>
        <taxon>Streptophyta</taxon>
        <taxon>Embryophyta</taxon>
        <taxon>Tracheophyta</taxon>
        <taxon>Spermatophyta</taxon>
        <taxon>Magnoliopsida</taxon>
        <taxon>Liliopsida</taxon>
        <taxon>Poales</taxon>
        <taxon>Poaceae</taxon>
        <taxon>BOP clade</taxon>
        <taxon>Oryzoideae</taxon>
        <taxon>Oryzeae</taxon>
        <taxon>Oryzinae</taxon>
        <taxon>Oryza</taxon>
        <taxon>Oryza sativa</taxon>
    </lineage>
</organism>
<protein>
    <recommendedName>
        <fullName evidence="5">Kinesin-like protein KIN-14L</fullName>
    </recommendedName>
</protein>